<proteinExistence type="inferred from homology"/>
<dbReference type="EMBL" id="L77117">
    <property type="protein sequence ID" value="AAB98775.1"/>
    <property type="molecule type" value="Genomic_DNA"/>
</dbReference>
<dbReference type="PIR" id="B64396">
    <property type="entry name" value="B64396"/>
</dbReference>
<dbReference type="SMR" id="Q58180"/>
<dbReference type="FunCoup" id="Q58180">
    <property type="interactions" value="1"/>
</dbReference>
<dbReference type="STRING" id="243232.MJ_0770"/>
<dbReference type="PaxDb" id="243232-MJ_0770"/>
<dbReference type="EnsemblBacteria" id="AAB98775">
    <property type="protein sequence ID" value="AAB98775"/>
    <property type="gene ID" value="MJ_0770"/>
</dbReference>
<dbReference type="KEGG" id="mja:MJ_0770"/>
<dbReference type="eggNOG" id="arCOG06578">
    <property type="taxonomic scope" value="Archaea"/>
</dbReference>
<dbReference type="HOGENOM" id="CLU_1472098_0_0_2"/>
<dbReference type="InParanoid" id="Q58180"/>
<dbReference type="OrthoDB" id="95836at2157"/>
<dbReference type="Proteomes" id="UP000000805">
    <property type="component" value="Chromosome"/>
</dbReference>
<dbReference type="GO" id="GO:0003677">
    <property type="term" value="F:DNA binding"/>
    <property type="evidence" value="ECO:0007669"/>
    <property type="project" value="InterPro"/>
</dbReference>
<dbReference type="GO" id="GO:0009009">
    <property type="term" value="F:site-specific recombinase activity"/>
    <property type="evidence" value="ECO:0000318"/>
    <property type="project" value="GO_Central"/>
</dbReference>
<dbReference type="GO" id="GO:0007059">
    <property type="term" value="P:chromosome segregation"/>
    <property type="evidence" value="ECO:0000318"/>
    <property type="project" value="GO_Central"/>
</dbReference>
<dbReference type="GO" id="GO:0006310">
    <property type="term" value="P:DNA recombination"/>
    <property type="evidence" value="ECO:0000318"/>
    <property type="project" value="GO_Central"/>
</dbReference>
<dbReference type="Gene3D" id="1.10.443.10">
    <property type="entry name" value="Intergrase catalytic core"/>
    <property type="match status" value="1"/>
</dbReference>
<dbReference type="InterPro" id="IPR011010">
    <property type="entry name" value="DNA_brk_join_enz"/>
</dbReference>
<dbReference type="InterPro" id="IPR013762">
    <property type="entry name" value="Integrase-like_cat_sf"/>
</dbReference>
<dbReference type="InterPro" id="IPR002104">
    <property type="entry name" value="Integrase_catalytic"/>
</dbReference>
<dbReference type="Pfam" id="PF00589">
    <property type="entry name" value="Phage_integrase"/>
    <property type="match status" value="1"/>
</dbReference>
<dbReference type="SUPFAM" id="SSF56349">
    <property type="entry name" value="DNA breaking-rejoining enzymes"/>
    <property type="match status" value="1"/>
</dbReference>
<dbReference type="PROSITE" id="PS51898">
    <property type="entry name" value="TYR_RECOMBINASE"/>
    <property type="match status" value="1"/>
</dbReference>
<organism>
    <name type="scientific">Methanocaldococcus jannaschii (strain ATCC 43067 / DSM 2661 / JAL-1 / JCM 10045 / NBRC 100440)</name>
    <name type="common">Methanococcus jannaschii</name>
    <dbReference type="NCBI Taxonomy" id="243232"/>
    <lineage>
        <taxon>Archaea</taxon>
        <taxon>Methanobacteriati</taxon>
        <taxon>Methanobacteriota</taxon>
        <taxon>Methanomada group</taxon>
        <taxon>Methanococci</taxon>
        <taxon>Methanococcales</taxon>
        <taxon>Methanocaldococcaceae</taxon>
        <taxon>Methanocaldococcus</taxon>
    </lineage>
</organism>
<feature type="chain" id="PRO_0000107025" description="Uncharacterized protein MJ0770">
    <location>
        <begin position="1"/>
        <end position="223"/>
    </location>
</feature>
<feature type="domain" description="Tyr recombinase" evidence="1">
    <location>
        <begin position="29"/>
        <end position="220"/>
    </location>
</feature>
<feature type="active site" evidence="1">
    <location>
        <position position="71"/>
    </location>
</feature>
<feature type="active site" evidence="1">
    <location>
        <position position="103"/>
    </location>
</feature>
<feature type="active site" evidence="1">
    <location>
        <position position="170"/>
    </location>
</feature>
<feature type="active site" evidence="1">
    <location>
        <position position="173"/>
    </location>
</feature>
<feature type="active site" evidence="1">
    <location>
        <position position="196"/>
    </location>
</feature>
<feature type="active site" description="O-(3'-phospho-DNA)-tyrosine intermediate" evidence="1">
    <location>
        <position position="205"/>
    </location>
</feature>
<gene>
    <name type="ordered locus">MJ0770</name>
</gene>
<comment type="similarity">
    <text evidence="1">Belongs to the 'phage' integrase family.</text>
</comment>
<name>Y770_METJA</name>
<accession>Q58180</accession>
<protein>
    <recommendedName>
        <fullName>Uncharacterized protein MJ0770</fullName>
    </recommendedName>
</protein>
<evidence type="ECO:0000255" key="1">
    <source>
        <dbReference type="PROSITE-ProRule" id="PRU01246"/>
    </source>
</evidence>
<reference key="1">
    <citation type="journal article" date="1996" name="Science">
        <title>Complete genome sequence of the methanogenic archaeon, Methanococcus jannaschii.</title>
        <authorList>
            <person name="Bult C.J."/>
            <person name="White O."/>
            <person name="Olsen G.J."/>
            <person name="Zhou L."/>
            <person name="Fleischmann R.D."/>
            <person name="Sutton G.G."/>
            <person name="Blake J.A."/>
            <person name="FitzGerald L.M."/>
            <person name="Clayton R.A."/>
            <person name="Gocayne J.D."/>
            <person name="Kerlavage A.R."/>
            <person name="Dougherty B.A."/>
            <person name="Tomb J.-F."/>
            <person name="Adams M.D."/>
            <person name="Reich C.I."/>
            <person name="Overbeek R."/>
            <person name="Kirkness E.F."/>
            <person name="Weinstock K.G."/>
            <person name="Merrick J.M."/>
            <person name="Glodek A."/>
            <person name="Scott J.L."/>
            <person name="Geoghagen N.S.M."/>
            <person name="Weidman J.F."/>
            <person name="Fuhrmann J.L."/>
            <person name="Nguyen D."/>
            <person name="Utterback T.R."/>
            <person name="Kelley J.M."/>
            <person name="Peterson J.D."/>
            <person name="Sadow P.W."/>
            <person name="Hanna M.C."/>
            <person name="Cotton M.D."/>
            <person name="Roberts K.M."/>
            <person name="Hurst M.A."/>
            <person name="Kaine B.P."/>
            <person name="Borodovsky M."/>
            <person name="Klenk H.-P."/>
            <person name="Fraser C.M."/>
            <person name="Smith H.O."/>
            <person name="Woese C.R."/>
            <person name="Venter J.C."/>
        </authorList>
    </citation>
    <scope>NUCLEOTIDE SEQUENCE [LARGE SCALE GENOMIC DNA]</scope>
    <source>
        <strain>ATCC 43067 / DSM 2661 / JAL-1 / JCM 10045 / NBRC 100440</strain>
    </source>
</reference>
<sequence>MMIWDWNLSKPSESIKKHSGTWDKGIDYKQTYKMFKEDLQKLKNKELLYEDDYKRIAYLITFLFQLRNGCRIWEAIAGMINIAINIDNLNWNERITVKVRTQKRKDWEFRELIIPKCIKKEDIEMVRDVFLDIKKEIDEKLTMDEKLKAKKKIVKRFGAWLYKNYGINTHSLRYAYVTYLGEHGIPAQVLAKITKHKNINYIETYTQSRLAKEILKNIGDLDD</sequence>
<keyword id="KW-0233">DNA recombination</keyword>
<keyword id="KW-1185">Reference proteome</keyword>